<gene>
    <name evidence="1" type="primary">rpmF</name>
    <name type="ordered locus">YPK_1682</name>
</gene>
<protein>
    <recommendedName>
        <fullName evidence="1">Large ribosomal subunit protein bL32</fullName>
    </recommendedName>
    <alternativeName>
        <fullName evidence="3">50S ribosomal protein L32</fullName>
    </alternativeName>
</protein>
<feature type="chain" id="PRO_1000120196" description="Large ribosomal subunit protein bL32">
    <location>
        <begin position="1"/>
        <end position="55"/>
    </location>
</feature>
<feature type="region of interest" description="Disordered" evidence="2">
    <location>
        <begin position="1"/>
        <end position="27"/>
    </location>
</feature>
<dbReference type="EMBL" id="CP000950">
    <property type="protein sequence ID" value="ACA67975.1"/>
    <property type="molecule type" value="Genomic_DNA"/>
</dbReference>
<dbReference type="RefSeq" id="WP_002210931.1">
    <property type="nucleotide sequence ID" value="NZ_CP009792.1"/>
</dbReference>
<dbReference type="SMR" id="B1JHI1"/>
<dbReference type="GeneID" id="97455787"/>
<dbReference type="KEGG" id="ypy:YPK_1682"/>
<dbReference type="PATRIC" id="fig|502800.11.peg.2344"/>
<dbReference type="GO" id="GO:0015934">
    <property type="term" value="C:large ribosomal subunit"/>
    <property type="evidence" value="ECO:0007669"/>
    <property type="project" value="InterPro"/>
</dbReference>
<dbReference type="GO" id="GO:0003735">
    <property type="term" value="F:structural constituent of ribosome"/>
    <property type="evidence" value="ECO:0007669"/>
    <property type="project" value="InterPro"/>
</dbReference>
<dbReference type="GO" id="GO:0006412">
    <property type="term" value="P:translation"/>
    <property type="evidence" value="ECO:0007669"/>
    <property type="project" value="UniProtKB-UniRule"/>
</dbReference>
<dbReference type="HAMAP" id="MF_00340">
    <property type="entry name" value="Ribosomal_bL32"/>
    <property type="match status" value="1"/>
</dbReference>
<dbReference type="InterPro" id="IPR002677">
    <property type="entry name" value="Ribosomal_bL32"/>
</dbReference>
<dbReference type="InterPro" id="IPR044957">
    <property type="entry name" value="Ribosomal_bL32_bact"/>
</dbReference>
<dbReference type="InterPro" id="IPR011332">
    <property type="entry name" value="Ribosomal_zn-bd"/>
</dbReference>
<dbReference type="NCBIfam" id="TIGR01031">
    <property type="entry name" value="rpmF_bact"/>
    <property type="match status" value="1"/>
</dbReference>
<dbReference type="PANTHER" id="PTHR35534">
    <property type="entry name" value="50S RIBOSOMAL PROTEIN L32"/>
    <property type="match status" value="1"/>
</dbReference>
<dbReference type="PANTHER" id="PTHR35534:SF1">
    <property type="entry name" value="LARGE RIBOSOMAL SUBUNIT PROTEIN BL32"/>
    <property type="match status" value="1"/>
</dbReference>
<dbReference type="Pfam" id="PF01783">
    <property type="entry name" value="Ribosomal_L32p"/>
    <property type="match status" value="1"/>
</dbReference>
<dbReference type="SUPFAM" id="SSF57829">
    <property type="entry name" value="Zn-binding ribosomal proteins"/>
    <property type="match status" value="1"/>
</dbReference>
<comment type="similarity">
    <text evidence="1">Belongs to the bacterial ribosomal protein bL32 family.</text>
</comment>
<sequence>MAVQQNKPTRSKRGMRRSHDALTTATLSVDKTSGETHLRHHITADGFYRGRKVIG</sequence>
<accession>B1JHI1</accession>
<evidence type="ECO:0000255" key="1">
    <source>
        <dbReference type="HAMAP-Rule" id="MF_00340"/>
    </source>
</evidence>
<evidence type="ECO:0000256" key="2">
    <source>
        <dbReference type="SAM" id="MobiDB-lite"/>
    </source>
</evidence>
<evidence type="ECO:0000305" key="3"/>
<organism>
    <name type="scientific">Yersinia pseudotuberculosis serotype O:3 (strain YPIII)</name>
    <dbReference type="NCBI Taxonomy" id="502800"/>
    <lineage>
        <taxon>Bacteria</taxon>
        <taxon>Pseudomonadati</taxon>
        <taxon>Pseudomonadota</taxon>
        <taxon>Gammaproteobacteria</taxon>
        <taxon>Enterobacterales</taxon>
        <taxon>Yersiniaceae</taxon>
        <taxon>Yersinia</taxon>
    </lineage>
</organism>
<proteinExistence type="inferred from homology"/>
<name>RL32_YERPY</name>
<reference key="1">
    <citation type="submission" date="2008-02" db="EMBL/GenBank/DDBJ databases">
        <title>Complete sequence of Yersinia pseudotuberculosis YPIII.</title>
        <authorList>
            <consortium name="US DOE Joint Genome Institute"/>
            <person name="Copeland A."/>
            <person name="Lucas S."/>
            <person name="Lapidus A."/>
            <person name="Glavina del Rio T."/>
            <person name="Dalin E."/>
            <person name="Tice H."/>
            <person name="Bruce D."/>
            <person name="Goodwin L."/>
            <person name="Pitluck S."/>
            <person name="Munk A.C."/>
            <person name="Brettin T."/>
            <person name="Detter J.C."/>
            <person name="Han C."/>
            <person name="Tapia R."/>
            <person name="Schmutz J."/>
            <person name="Larimer F."/>
            <person name="Land M."/>
            <person name="Hauser L."/>
            <person name="Challacombe J.F."/>
            <person name="Green L."/>
            <person name="Lindler L.E."/>
            <person name="Nikolich M.P."/>
            <person name="Richardson P."/>
        </authorList>
    </citation>
    <scope>NUCLEOTIDE SEQUENCE [LARGE SCALE GENOMIC DNA]</scope>
    <source>
        <strain>YPIII</strain>
    </source>
</reference>
<keyword id="KW-0687">Ribonucleoprotein</keyword>
<keyword id="KW-0689">Ribosomal protein</keyword>